<sequence>MHKLIIKYNKQLKMLNLRDGKTYTISEDERADITLKSLGEVIHLEQNNQGTWQANHTSINKVLVRKGDLDDITLQLYTEADYASFAYPSIQDTMTIGPNAYDDMVIQSLMNAIIIKDFQSIQESQYVRIVHDKNTDVYINYELQEQLTNKAYIGDHIYVEGIWLEVQADGLNVLSQNTVASSLIRLTQEMPHAQADDYNTYHRSPRIIHREPTDDIKIERPPQPIQKNNTVIWRSIIPPLVMIALTVVIFLVRPIGIYILMMIGMSTVTIVFGITTYFSEKKKYNKDVEKREKDYKAYLDNKSKEINKAIKAQRFSLNYHYPTVAEIKDIVETKAPRIYEKTSHHHDFLHYKLGIANVEKSFKLDYQEEEFNQRRDELFDDAKELYEFYTDVEQAPLINDLNHGPIAYIGARHLILEELEKMLIQLSTFHSYHDLEFLFVTREDEVETLKWARWLPHMTLRGQNIRGFVYNQRTRDQILTSIYSMIKERIQAVRERSRSNEQIIFTPQLVFVITDMSLIIDHVILEYVNQDLSEYGISLIFVEDVIESLPEHVDTIIDIKSRTEGELITKEKELVQLKFTPENIDNVDKEYIARRLANLIHVEHLKNAIPDSITFLEMYNVKEVDQLDVVNRWRQNETYKTMAVPLGVRGKDDILSLNLHEKAHGPHGLVAGTTGSGKSEIIQSYILSLAINFHPHEVAFLLIDYKGGGMANLFKDLVHLVGTITNLDGDEAMRALTSIKAELRKRQRLFGEHDVNHINQYHKLFKEGIATEPMPHLFIISDEFAELKSEQPDFMKELVSTARIGRSLGIHLILATQKPSGVVDDQIWSNSKFKLALKVQDRQDSNEILKTPDAADITLPGRAYLQVGNNEIYELFQSAWSGATYDIEGDKLEVEDKTIYMINDYGQLQAINKDLSGLEDEETKENQTELEAVIDHIESITTRLEIEEVKRPWLPPLPENVYQEDLVETDFRKLWSDDAKEVELTLGLKDVPEEQYQGPMVLQLKKAGHIALIGSPGYGRTTFLHNIIFDVARHHRPDQAHMYLFDFGTNGLMPVTDIPHVADYFTVDQEDKIAKAIRIFNDEIDRRKKILSQYRVTSISEYRKLTGETIPHVFILIDNFDAVKDSPFQEVFENMMIKMTREGLALDMQVTLTASRANAMKTPMYINMKTRIAMFLYDKSEVSNVVGQQKFAVKDVVGRALLSSDDNVSFHIGQPFKHDETKSYNDQINDEVSAMTEFYKGETPNDIPMMPDEIKYEDYRESLNLPDIVANGALPIGLDYEGVTLQKIKLTEPAMISSENPREIAHIAEIMMKEIDILNEKYAICIADSSGEFKAYRHQVANFAEEREDIKAIHQLMIEDLKQREMDGPFEKDSLYIINDFKTFIDCTYIPEDDVKKLITKGPELGLNILFVGIHKELIDAYDKQIDVARKMINQFSIGIRISDQQFFKFRFIQREPVIKENEAYMVANQAYQKIRWFK</sequence>
<protein>
    <recommendedName>
        <fullName evidence="1">Type VII secretion system protein EssC</fullName>
    </recommendedName>
</protein>
<dbReference type="EMBL" id="CP000046">
    <property type="protein sequence ID" value="AAW38830.1"/>
    <property type="molecule type" value="Genomic_DNA"/>
</dbReference>
<dbReference type="RefSeq" id="WP_000549278.1">
    <property type="nucleotide sequence ID" value="NZ_JBGOFO010000001.1"/>
</dbReference>
<dbReference type="SMR" id="Q5HJ86"/>
<dbReference type="KEGG" id="sac:SACOL0276"/>
<dbReference type="HOGENOM" id="CLU_003134_2_1_9"/>
<dbReference type="Proteomes" id="UP000000530">
    <property type="component" value="Chromosome"/>
</dbReference>
<dbReference type="GO" id="GO:0005886">
    <property type="term" value="C:plasma membrane"/>
    <property type="evidence" value="ECO:0007669"/>
    <property type="project" value="UniProtKB-SubCell"/>
</dbReference>
<dbReference type="GO" id="GO:0005524">
    <property type="term" value="F:ATP binding"/>
    <property type="evidence" value="ECO:0007669"/>
    <property type="project" value="UniProtKB-KW"/>
</dbReference>
<dbReference type="GO" id="GO:0003677">
    <property type="term" value="F:DNA binding"/>
    <property type="evidence" value="ECO:0007669"/>
    <property type="project" value="InterPro"/>
</dbReference>
<dbReference type="CDD" id="cd01127">
    <property type="entry name" value="TrwB_TraG_TraD_VirD4"/>
    <property type="match status" value="1"/>
</dbReference>
<dbReference type="Gene3D" id="2.60.200.20">
    <property type="match status" value="2"/>
</dbReference>
<dbReference type="Gene3D" id="3.40.50.300">
    <property type="entry name" value="P-loop containing nucleotide triphosphate hydrolases"/>
    <property type="match status" value="2"/>
</dbReference>
<dbReference type="InterPro" id="IPR023839">
    <property type="entry name" value="Firmicutes_EssC_C"/>
</dbReference>
<dbReference type="InterPro" id="IPR022206">
    <property type="entry name" value="Firmicutes_EssC_N"/>
</dbReference>
<dbReference type="InterPro" id="IPR050206">
    <property type="entry name" value="FtsK/SpoIIIE/SftA"/>
</dbReference>
<dbReference type="InterPro" id="IPR002543">
    <property type="entry name" value="FtsK_dom"/>
</dbReference>
<dbReference type="InterPro" id="IPR027417">
    <property type="entry name" value="P-loop_NTPase"/>
</dbReference>
<dbReference type="InterPro" id="IPR008984">
    <property type="entry name" value="SMAD_FHA_dom_sf"/>
</dbReference>
<dbReference type="NCBIfam" id="TIGR03928">
    <property type="entry name" value="T7_EssCb_Firm"/>
    <property type="match status" value="1"/>
</dbReference>
<dbReference type="PANTHER" id="PTHR22683:SF41">
    <property type="entry name" value="DNA TRANSLOCASE FTSK"/>
    <property type="match status" value="1"/>
</dbReference>
<dbReference type="PANTHER" id="PTHR22683">
    <property type="entry name" value="SPORULATION PROTEIN RELATED"/>
    <property type="match status" value="1"/>
</dbReference>
<dbReference type="Pfam" id="PF01580">
    <property type="entry name" value="FtsK_SpoIIIE"/>
    <property type="match status" value="2"/>
</dbReference>
<dbReference type="Pfam" id="PF12538">
    <property type="entry name" value="FtsK_SpoIIIE_N"/>
    <property type="match status" value="1"/>
</dbReference>
<dbReference type="SUPFAM" id="SSF52540">
    <property type="entry name" value="P-loop containing nucleoside triphosphate hydrolases"/>
    <property type="match status" value="2"/>
</dbReference>
<dbReference type="SUPFAM" id="SSF49879">
    <property type="entry name" value="SMAD/FHA domain"/>
    <property type="match status" value="2"/>
</dbReference>
<dbReference type="PROSITE" id="PS50901">
    <property type="entry name" value="FTSK"/>
    <property type="match status" value="2"/>
</dbReference>
<proteinExistence type="inferred from homology"/>
<comment type="function">
    <text evidence="2">Component of the type VII secretion system (Ess). Required for the secretion of substrates including EsxA and EsxB. However, unable to support secretion of the substrate protein EsxC.</text>
</comment>
<comment type="subunit">
    <text evidence="2">Homooligomer. Interacts with EsaE.</text>
</comment>
<comment type="subcellular location">
    <subcellularLocation>
        <location evidence="2">Cell membrane</location>
        <topology evidence="3">Multi-pass membrane protein</topology>
    </subcellularLocation>
</comment>
<comment type="similarity">
    <text evidence="5">Belongs to the EssC family.</text>
</comment>
<gene>
    <name evidence="1" type="primary">essC</name>
    <name type="ordered locus">SACOL0276</name>
</gene>
<feature type="chain" id="PRO_0000098329" description="Type VII secretion system protein EssC">
    <location>
        <begin position="1"/>
        <end position="1479"/>
    </location>
</feature>
<feature type="topological domain" description="Cytoplasmic" evidence="1">
    <location>
        <begin position="1"/>
        <end position="229"/>
    </location>
</feature>
<feature type="transmembrane region" description="Helical" evidence="3">
    <location>
        <begin position="230"/>
        <end position="252"/>
    </location>
</feature>
<feature type="topological domain" description="Extracellular" evidence="1">
    <location>
        <begin position="253"/>
        <end position="256"/>
    </location>
</feature>
<feature type="transmembrane region" description="Helical" evidence="3">
    <location>
        <begin position="257"/>
        <end position="279"/>
    </location>
</feature>
<feature type="topological domain" description="Cytoplasmic" evidence="1">
    <location>
        <begin position="280"/>
        <end position="1479"/>
    </location>
</feature>
<feature type="domain" description="FtsK 1" evidence="4">
    <location>
        <begin position="652"/>
        <end position="846"/>
    </location>
</feature>
<feature type="domain" description="FtsK 2" evidence="4">
    <location>
        <begin position="997"/>
        <end position="1183"/>
    </location>
</feature>
<feature type="binding site" evidence="4">
    <location>
        <begin position="672"/>
        <end position="679"/>
    </location>
    <ligand>
        <name>ATP</name>
        <dbReference type="ChEBI" id="CHEBI:30616"/>
    </ligand>
</feature>
<feature type="binding site" evidence="4">
    <location>
        <begin position="1014"/>
        <end position="1021"/>
    </location>
    <ligand>
        <name>ATP</name>
        <dbReference type="ChEBI" id="CHEBI:30616"/>
    </ligand>
</feature>
<keyword id="KW-0067">ATP-binding</keyword>
<keyword id="KW-1003">Cell membrane</keyword>
<keyword id="KW-0472">Membrane</keyword>
<keyword id="KW-0547">Nucleotide-binding</keyword>
<keyword id="KW-0677">Repeat</keyword>
<keyword id="KW-0812">Transmembrane</keyword>
<keyword id="KW-1133">Transmembrane helix</keyword>
<keyword id="KW-0843">Virulence</keyword>
<name>ESSC_STAAC</name>
<accession>Q5HJ86</accession>
<evidence type="ECO:0000250" key="1">
    <source>
        <dbReference type="UniProtKB" id="P0C048"/>
    </source>
</evidence>
<evidence type="ECO:0000250" key="2">
    <source>
        <dbReference type="UniProtKB" id="Q2G184"/>
    </source>
</evidence>
<evidence type="ECO:0000255" key="3"/>
<evidence type="ECO:0000255" key="4">
    <source>
        <dbReference type="PROSITE-ProRule" id="PRU00289"/>
    </source>
</evidence>
<evidence type="ECO:0000305" key="5"/>
<organism>
    <name type="scientific">Staphylococcus aureus (strain COL)</name>
    <dbReference type="NCBI Taxonomy" id="93062"/>
    <lineage>
        <taxon>Bacteria</taxon>
        <taxon>Bacillati</taxon>
        <taxon>Bacillota</taxon>
        <taxon>Bacilli</taxon>
        <taxon>Bacillales</taxon>
        <taxon>Staphylococcaceae</taxon>
        <taxon>Staphylococcus</taxon>
    </lineage>
</organism>
<reference key="1">
    <citation type="journal article" date="2005" name="J. Bacteriol.">
        <title>Insights on evolution of virulence and resistance from the complete genome analysis of an early methicillin-resistant Staphylococcus aureus strain and a biofilm-producing methicillin-resistant Staphylococcus epidermidis strain.</title>
        <authorList>
            <person name="Gill S.R."/>
            <person name="Fouts D.E."/>
            <person name="Archer G.L."/>
            <person name="Mongodin E.F."/>
            <person name="DeBoy R.T."/>
            <person name="Ravel J."/>
            <person name="Paulsen I.T."/>
            <person name="Kolonay J.F."/>
            <person name="Brinkac L.M."/>
            <person name="Beanan M.J."/>
            <person name="Dodson R.J."/>
            <person name="Daugherty S.C."/>
            <person name="Madupu R."/>
            <person name="Angiuoli S.V."/>
            <person name="Durkin A.S."/>
            <person name="Haft D.H."/>
            <person name="Vamathevan J.J."/>
            <person name="Khouri H."/>
            <person name="Utterback T.R."/>
            <person name="Lee C."/>
            <person name="Dimitrov G."/>
            <person name="Jiang L."/>
            <person name="Qin H."/>
            <person name="Weidman J."/>
            <person name="Tran K."/>
            <person name="Kang K.H."/>
            <person name="Hance I.R."/>
            <person name="Nelson K.E."/>
            <person name="Fraser C.M."/>
        </authorList>
    </citation>
    <scope>NUCLEOTIDE SEQUENCE [LARGE SCALE GENOMIC DNA]</scope>
    <source>
        <strain>COL</strain>
    </source>
</reference>